<name>HLDD_CHRVO</name>
<reference key="1">
    <citation type="journal article" date="2003" name="Proc. Natl. Acad. Sci. U.S.A.">
        <title>The complete genome sequence of Chromobacterium violaceum reveals remarkable and exploitable bacterial adaptability.</title>
        <authorList>
            <person name="Vasconcelos A.T.R."/>
            <person name="de Almeida D.F."/>
            <person name="Hungria M."/>
            <person name="Guimaraes C.T."/>
            <person name="Antonio R.V."/>
            <person name="Almeida F.C."/>
            <person name="de Almeida L.G.P."/>
            <person name="de Almeida R."/>
            <person name="Alves-Gomes J.A."/>
            <person name="Andrade E.M."/>
            <person name="Araripe J."/>
            <person name="de Araujo M.F.F."/>
            <person name="Astolfi-Filho S."/>
            <person name="Azevedo V."/>
            <person name="Baptista A.J."/>
            <person name="Bataus L.A.M."/>
            <person name="Batista J.S."/>
            <person name="Belo A."/>
            <person name="van den Berg C."/>
            <person name="Bogo M."/>
            <person name="Bonatto S."/>
            <person name="Bordignon J."/>
            <person name="Brigido M.M."/>
            <person name="Brito C.A."/>
            <person name="Brocchi M."/>
            <person name="Burity H.A."/>
            <person name="Camargo A.A."/>
            <person name="Cardoso D.D.P."/>
            <person name="Carneiro N.P."/>
            <person name="Carraro D.M."/>
            <person name="Carvalho C.M.B."/>
            <person name="Cascardo J.C.M."/>
            <person name="Cavada B.S."/>
            <person name="Chueire L.M.O."/>
            <person name="Creczynski-Pasa T.B."/>
            <person name="Cunha-Junior N.C."/>
            <person name="Fagundes N."/>
            <person name="Falcao C.L."/>
            <person name="Fantinatti F."/>
            <person name="Farias I.P."/>
            <person name="Felipe M.S.S."/>
            <person name="Ferrari L.P."/>
            <person name="Ferro J.A."/>
            <person name="Ferro M.I.T."/>
            <person name="Franco G.R."/>
            <person name="Freitas N.S.A."/>
            <person name="Furlan L.R."/>
            <person name="Gazzinelli R.T."/>
            <person name="Gomes E.A."/>
            <person name="Goncalves P.R."/>
            <person name="Grangeiro T.B."/>
            <person name="Grattapaglia D."/>
            <person name="Grisard E.C."/>
            <person name="Hanna E.S."/>
            <person name="Jardim S.N."/>
            <person name="Laurino J."/>
            <person name="Leoi L.C.T."/>
            <person name="Lima L.F.A."/>
            <person name="Loureiro M.F."/>
            <person name="Lyra M.C.C.P."/>
            <person name="Madeira H.M.F."/>
            <person name="Manfio G.P."/>
            <person name="Maranhao A.Q."/>
            <person name="Martins W.S."/>
            <person name="di Mauro S.M.Z."/>
            <person name="de Medeiros S.R.B."/>
            <person name="Meissner R.V."/>
            <person name="Moreira M.A.M."/>
            <person name="Nascimento F.F."/>
            <person name="Nicolas M.F."/>
            <person name="Oliveira J.G."/>
            <person name="Oliveira S.C."/>
            <person name="Paixao R.F.C."/>
            <person name="Parente J.A."/>
            <person name="Pedrosa F.O."/>
            <person name="Pena S.D.J."/>
            <person name="Pereira J.O."/>
            <person name="Pereira M."/>
            <person name="Pinto L.S.R.C."/>
            <person name="Pinto L.S."/>
            <person name="Porto J.I.R."/>
            <person name="Potrich D.P."/>
            <person name="Ramalho-Neto C.E."/>
            <person name="Reis A.M.M."/>
            <person name="Rigo L.U."/>
            <person name="Rondinelli E."/>
            <person name="Santos E.B.P."/>
            <person name="Santos F.R."/>
            <person name="Schneider M.P.C."/>
            <person name="Seuanez H.N."/>
            <person name="Silva A.M.R."/>
            <person name="da Silva A.L.C."/>
            <person name="Silva D.W."/>
            <person name="Silva R."/>
            <person name="Simoes I.C."/>
            <person name="Simon D."/>
            <person name="Soares C.M.A."/>
            <person name="Soares R.B.A."/>
            <person name="Souza E.M."/>
            <person name="Souza K.R.L."/>
            <person name="Souza R.C."/>
            <person name="Steffens M.B.R."/>
            <person name="Steindel M."/>
            <person name="Teixeira S.R."/>
            <person name="Urmenyi T."/>
            <person name="Vettore A."/>
            <person name="Wassem R."/>
            <person name="Zaha A."/>
            <person name="Simpson A.J.G."/>
        </authorList>
    </citation>
    <scope>NUCLEOTIDE SEQUENCE [LARGE SCALE GENOMIC DNA]</scope>
    <source>
        <strain>ATCC 12472 / DSM 30191 / JCM 1249 / CCUG 213 / NBRC 12614 / NCIMB 9131 / NCTC 9757 / MK</strain>
    </source>
</reference>
<organism>
    <name type="scientific">Chromobacterium violaceum (strain ATCC 12472 / DSM 30191 / JCM 1249 / CCUG 213 / NBRC 12614 / NCIMB 9131 / NCTC 9757 / MK)</name>
    <dbReference type="NCBI Taxonomy" id="243365"/>
    <lineage>
        <taxon>Bacteria</taxon>
        <taxon>Pseudomonadati</taxon>
        <taxon>Pseudomonadota</taxon>
        <taxon>Betaproteobacteria</taxon>
        <taxon>Neisseriales</taxon>
        <taxon>Chromobacteriaceae</taxon>
        <taxon>Chromobacterium</taxon>
    </lineage>
</organism>
<comment type="function">
    <text evidence="1">Catalyzes the interconversion between ADP-D-glycero-beta-D-manno-heptose and ADP-L-glycero-beta-D-manno-heptose via an epimerization at carbon 6 of the heptose.</text>
</comment>
<comment type="catalytic activity">
    <reaction evidence="1">
        <text>ADP-D-glycero-beta-D-manno-heptose = ADP-L-glycero-beta-D-manno-heptose</text>
        <dbReference type="Rhea" id="RHEA:17577"/>
        <dbReference type="ChEBI" id="CHEBI:59967"/>
        <dbReference type="ChEBI" id="CHEBI:61506"/>
        <dbReference type="EC" id="5.1.3.20"/>
    </reaction>
</comment>
<comment type="cofactor">
    <cofactor evidence="1">
        <name>NADP(+)</name>
        <dbReference type="ChEBI" id="CHEBI:58349"/>
    </cofactor>
    <text evidence="1">Binds 1 NADP(+) per subunit.</text>
</comment>
<comment type="pathway">
    <text evidence="1">Nucleotide-sugar biosynthesis; ADP-L-glycero-beta-D-manno-heptose biosynthesis; ADP-L-glycero-beta-D-manno-heptose from D-glycero-beta-D-manno-heptose 7-phosphate: step 4/4.</text>
</comment>
<comment type="pathway">
    <text>Bacterial outer membrane biogenesis; LPS core biosynthesis.</text>
</comment>
<comment type="subunit">
    <text evidence="1">Homopentamer.</text>
</comment>
<comment type="domain">
    <text evidence="1">Contains a large N-terminal NADP-binding domain, and a smaller C-terminal substrate-binding domain.</text>
</comment>
<comment type="similarity">
    <text evidence="1">Belongs to the NAD(P)-dependent epimerase/dehydratase family. HldD subfamily.</text>
</comment>
<gene>
    <name evidence="1" type="primary">hldD</name>
    <name type="synonym">rfaD</name>
    <name type="ordered locus">CV_3038</name>
</gene>
<proteinExistence type="inferred from homology"/>
<sequence length="333" mass="37517">MTIVVTGAAGFIGSNLVKGLNQRGITDIIAVDNLSNGDKFHNLVDCEISHYLDKHEFLHLLLDGEYEGELSAILHQGACSDTMNHDGKYMMDNNYQYTLALFDYCQHEEIQFLYASSAATYGKGTVFKEERQHEGPLNVYGYSKFLFDQVLRQRIKEGLSAQAVGFRYFNVYGPREQHKGRMASVAFHHFNQYREHGKVKLFGGWDGWENGMQSRDFVSVEDVVKVNLFFLDNPGKSGIYNLGSGRSQPFNDVAEATVNACRRHEGKPALTLAEMIQQGIVEYIDFPDALKGKYQSFTQADIAKLREAGYAEAMLSVAEGVDRYVDWLIGRQG</sequence>
<feature type="chain" id="PRO_0000205791" description="ADP-L-glycero-D-manno-heptose-6-epimerase">
    <location>
        <begin position="1"/>
        <end position="333"/>
    </location>
</feature>
<feature type="active site" description="Proton acceptor" evidence="1">
    <location>
        <position position="140"/>
    </location>
</feature>
<feature type="active site" description="Proton acceptor" evidence="1">
    <location>
        <position position="179"/>
    </location>
</feature>
<feature type="binding site" evidence="1">
    <location>
        <begin position="11"/>
        <end position="12"/>
    </location>
    <ligand>
        <name>NADP(+)</name>
        <dbReference type="ChEBI" id="CHEBI:58349"/>
    </ligand>
</feature>
<feature type="binding site" evidence="1">
    <location>
        <begin position="32"/>
        <end position="33"/>
    </location>
    <ligand>
        <name>NADP(+)</name>
        <dbReference type="ChEBI" id="CHEBI:58349"/>
    </ligand>
</feature>
<feature type="binding site" evidence="1">
    <location>
        <position position="39"/>
    </location>
    <ligand>
        <name>NADP(+)</name>
        <dbReference type="ChEBI" id="CHEBI:58349"/>
    </ligand>
</feature>
<feature type="binding site" evidence="1">
    <location>
        <position position="54"/>
    </location>
    <ligand>
        <name>NADP(+)</name>
        <dbReference type="ChEBI" id="CHEBI:58349"/>
    </ligand>
</feature>
<feature type="binding site" evidence="1">
    <location>
        <begin position="76"/>
        <end position="80"/>
    </location>
    <ligand>
        <name>NADP(+)</name>
        <dbReference type="ChEBI" id="CHEBI:58349"/>
    </ligand>
</feature>
<feature type="binding site" evidence="1">
    <location>
        <position position="93"/>
    </location>
    <ligand>
        <name>NADP(+)</name>
        <dbReference type="ChEBI" id="CHEBI:58349"/>
    </ligand>
</feature>
<feature type="binding site" evidence="1">
    <location>
        <position position="144"/>
    </location>
    <ligand>
        <name>NADP(+)</name>
        <dbReference type="ChEBI" id="CHEBI:58349"/>
    </ligand>
</feature>
<feature type="binding site" evidence="1">
    <location>
        <position position="170"/>
    </location>
    <ligand>
        <name>substrate</name>
    </ligand>
</feature>
<feature type="binding site" evidence="1">
    <location>
        <position position="171"/>
    </location>
    <ligand>
        <name>NADP(+)</name>
        <dbReference type="ChEBI" id="CHEBI:58349"/>
    </ligand>
</feature>
<feature type="binding site" evidence="1">
    <location>
        <position position="179"/>
    </location>
    <ligand>
        <name>NADP(+)</name>
        <dbReference type="ChEBI" id="CHEBI:58349"/>
    </ligand>
</feature>
<feature type="binding site" evidence="1">
    <location>
        <position position="181"/>
    </location>
    <ligand>
        <name>substrate</name>
    </ligand>
</feature>
<feature type="binding site" evidence="1">
    <location>
        <position position="188"/>
    </location>
    <ligand>
        <name>substrate</name>
    </ligand>
</feature>
<feature type="binding site" evidence="1">
    <location>
        <begin position="202"/>
        <end position="205"/>
    </location>
    <ligand>
        <name>substrate</name>
    </ligand>
</feature>
<feature type="binding site" evidence="1">
    <location>
        <position position="215"/>
    </location>
    <ligand>
        <name>substrate</name>
    </ligand>
</feature>
<feature type="binding site" evidence="1">
    <location>
        <position position="294"/>
    </location>
    <ligand>
        <name>substrate</name>
    </ligand>
</feature>
<accession>Q7NTL6</accession>
<dbReference type="EC" id="5.1.3.20" evidence="1"/>
<dbReference type="EMBL" id="AE016825">
    <property type="protein sequence ID" value="AAQ60707.1"/>
    <property type="molecule type" value="Genomic_DNA"/>
</dbReference>
<dbReference type="RefSeq" id="WP_011136585.1">
    <property type="nucleotide sequence ID" value="NC_005085.1"/>
</dbReference>
<dbReference type="SMR" id="Q7NTL6"/>
<dbReference type="STRING" id="243365.CV_3038"/>
<dbReference type="GeneID" id="66368744"/>
<dbReference type="KEGG" id="cvi:CV_3038"/>
<dbReference type="eggNOG" id="COG0451">
    <property type="taxonomic scope" value="Bacteria"/>
</dbReference>
<dbReference type="HOGENOM" id="CLU_007383_1_3_4"/>
<dbReference type="OrthoDB" id="9803010at2"/>
<dbReference type="UniPathway" id="UPA00356">
    <property type="reaction ID" value="UER00440"/>
</dbReference>
<dbReference type="UniPathway" id="UPA00958"/>
<dbReference type="Proteomes" id="UP000001424">
    <property type="component" value="Chromosome"/>
</dbReference>
<dbReference type="GO" id="GO:0008712">
    <property type="term" value="F:ADP-glyceromanno-heptose 6-epimerase activity"/>
    <property type="evidence" value="ECO:0007669"/>
    <property type="project" value="UniProtKB-UniRule"/>
</dbReference>
<dbReference type="GO" id="GO:0050661">
    <property type="term" value="F:NADP binding"/>
    <property type="evidence" value="ECO:0007669"/>
    <property type="project" value="InterPro"/>
</dbReference>
<dbReference type="GO" id="GO:0097171">
    <property type="term" value="P:ADP-L-glycero-beta-D-manno-heptose biosynthetic process"/>
    <property type="evidence" value="ECO:0007669"/>
    <property type="project" value="UniProtKB-UniPathway"/>
</dbReference>
<dbReference type="GO" id="GO:0009244">
    <property type="term" value="P:lipopolysaccharide core region biosynthetic process"/>
    <property type="evidence" value="ECO:0007669"/>
    <property type="project" value="UniProtKB-UniPathway"/>
</dbReference>
<dbReference type="CDD" id="cd05248">
    <property type="entry name" value="ADP_GME_SDR_e"/>
    <property type="match status" value="1"/>
</dbReference>
<dbReference type="Gene3D" id="3.40.50.720">
    <property type="entry name" value="NAD(P)-binding Rossmann-like Domain"/>
    <property type="match status" value="1"/>
</dbReference>
<dbReference type="Gene3D" id="3.90.25.10">
    <property type="entry name" value="UDP-galactose 4-epimerase, domain 1"/>
    <property type="match status" value="1"/>
</dbReference>
<dbReference type="HAMAP" id="MF_01601">
    <property type="entry name" value="Heptose_epimerase"/>
    <property type="match status" value="1"/>
</dbReference>
<dbReference type="InterPro" id="IPR001509">
    <property type="entry name" value="Epimerase_deHydtase"/>
</dbReference>
<dbReference type="InterPro" id="IPR011912">
    <property type="entry name" value="Heptose_epim"/>
</dbReference>
<dbReference type="InterPro" id="IPR036291">
    <property type="entry name" value="NAD(P)-bd_dom_sf"/>
</dbReference>
<dbReference type="NCBIfam" id="TIGR02197">
    <property type="entry name" value="heptose_epim"/>
    <property type="match status" value="1"/>
</dbReference>
<dbReference type="PANTHER" id="PTHR43103:SF3">
    <property type="entry name" value="ADP-L-GLYCERO-D-MANNO-HEPTOSE-6-EPIMERASE"/>
    <property type="match status" value="1"/>
</dbReference>
<dbReference type="PANTHER" id="PTHR43103">
    <property type="entry name" value="NUCLEOSIDE-DIPHOSPHATE-SUGAR EPIMERASE"/>
    <property type="match status" value="1"/>
</dbReference>
<dbReference type="Pfam" id="PF01370">
    <property type="entry name" value="Epimerase"/>
    <property type="match status" value="1"/>
</dbReference>
<dbReference type="SUPFAM" id="SSF51735">
    <property type="entry name" value="NAD(P)-binding Rossmann-fold domains"/>
    <property type="match status" value="1"/>
</dbReference>
<keyword id="KW-0119">Carbohydrate metabolism</keyword>
<keyword id="KW-0413">Isomerase</keyword>
<keyword id="KW-0521">NADP</keyword>
<keyword id="KW-1185">Reference proteome</keyword>
<evidence type="ECO:0000255" key="1">
    <source>
        <dbReference type="HAMAP-Rule" id="MF_01601"/>
    </source>
</evidence>
<protein>
    <recommendedName>
        <fullName evidence="1">ADP-L-glycero-D-manno-heptose-6-epimerase</fullName>
        <ecNumber evidence="1">5.1.3.20</ecNumber>
    </recommendedName>
    <alternativeName>
        <fullName evidence="1">ADP-L-glycero-beta-D-manno-heptose-6-epimerase</fullName>
        <shortName evidence="1">ADP-glyceromanno-heptose 6-epimerase</shortName>
        <shortName evidence="1">ADP-hep 6-epimerase</shortName>
        <shortName evidence="1">AGME</shortName>
    </alternativeName>
</protein>